<organism>
    <name type="scientific">Streptococcus pyogenes serotype M4 (strain MGAS10750)</name>
    <dbReference type="NCBI Taxonomy" id="370554"/>
    <lineage>
        <taxon>Bacteria</taxon>
        <taxon>Bacillati</taxon>
        <taxon>Bacillota</taxon>
        <taxon>Bacilli</taxon>
        <taxon>Lactobacillales</taxon>
        <taxon>Streptococcaceae</taxon>
        <taxon>Streptococcus</taxon>
    </lineage>
</organism>
<keyword id="KW-0131">Cell cycle</keyword>
<keyword id="KW-0132">Cell division</keyword>
<keyword id="KW-0342">GTP-binding</keyword>
<keyword id="KW-0460">Magnesium</keyword>
<keyword id="KW-0479">Metal-binding</keyword>
<keyword id="KW-0547">Nucleotide-binding</keyword>
<keyword id="KW-0717">Septation</keyword>
<feature type="chain" id="PRO_0000266968" description="Probable GTP-binding protein EngB">
    <location>
        <begin position="1"/>
        <end position="199"/>
    </location>
</feature>
<feature type="domain" description="EngB-type G" evidence="1">
    <location>
        <begin position="28"/>
        <end position="199"/>
    </location>
</feature>
<feature type="binding site" evidence="1">
    <location>
        <begin position="36"/>
        <end position="43"/>
    </location>
    <ligand>
        <name>GTP</name>
        <dbReference type="ChEBI" id="CHEBI:37565"/>
    </ligand>
</feature>
<feature type="binding site" evidence="1">
    <location>
        <position position="43"/>
    </location>
    <ligand>
        <name>Mg(2+)</name>
        <dbReference type="ChEBI" id="CHEBI:18420"/>
    </ligand>
</feature>
<feature type="binding site" evidence="1">
    <location>
        <begin position="63"/>
        <end position="67"/>
    </location>
    <ligand>
        <name>GTP</name>
        <dbReference type="ChEBI" id="CHEBI:37565"/>
    </ligand>
</feature>
<feature type="binding site" evidence="1">
    <location>
        <position position="65"/>
    </location>
    <ligand>
        <name>Mg(2+)</name>
        <dbReference type="ChEBI" id="CHEBI:18420"/>
    </ligand>
</feature>
<feature type="binding site" evidence="1">
    <location>
        <begin position="81"/>
        <end position="84"/>
    </location>
    <ligand>
        <name>GTP</name>
        <dbReference type="ChEBI" id="CHEBI:37565"/>
    </ligand>
</feature>
<feature type="binding site" evidence="1">
    <location>
        <begin position="148"/>
        <end position="151"/>
    </location>
    <ligand>
        <name>GTP</name>
        <dbReference type="ChEBI" id="CHEBI:37565"/>
    </ligand>
</feature>
<feature type="binding site" evidence="1">
    <location>
        <begin position="180"/>
        <end position="182"/>
    </location>
    <ligand>
        <name>GTP</name>
        <dbReference type="ChEBI" id="CHEBI:37565"/>
    </ligand>
</feature>
<name>ENGB_STRPF</name>
<reference key="1">
    <citation type="journal article" date="2006" name="Proc. Natl. Acad. Sci. U.S.A.">
        <title>Molecular genetic anatomy of inter- and intraserotype variation in the human bacterial pathogen group A Streptococcus.</title>
        <authorList>
            <person name="Beres S.B."/>
            <person name="Richter E.W."/>
            <person name="Nagiec M.J."/>
            <person name="Sumby P."/>
            <person name="Porcella S.F."/>
            <person name="DeLeo F.R."/>
            <person name="Musser J.M."/>
        </authorList>
    </citation>
    <scope>NUCLEOTIDE SEQUENCE [LARGE SCALE GENOMIC DNA]</scope>
    <source>
        <strain>MGAS10750</strain>
    </source>
</reference>
<accession>Q1J740</accession>
<sequence>MAEEQVLNTHNASILLSAANKSHYPQDDLPEIALAGRSNVGKSSFINTILGRKNLARTSSKPGKTQLLNFFNIDNKLRFVDVPGYGYAKVSKSERAKWGKMIEEYLTSRDNLRAVVSLVDLRHAPSKEDIQMYDFLKYYDIPVIVVATKADKIPRGKWNKHESVVKKALNFDKSDTFIVFSSVERIGIDDSWDAILEQV</sequence>
<protein>
    <recommendedName>
        <fullName evidence="1">Probable GTP-binding protein EngB</fullName>
    </recommendedName>
</protein>
<proteinExistence type="inferred from homology"/>
<evidence type="ECO:0000255" key="1">
    <source>
        <dbReference type="HAMAP-Rule" id="MF_00321"/>
    </source>
</evidence>
<dbReference type="EMBL" id="CP000262">
    <property type="protein sequence ID" value="ABF37734.1"/>
    <property type="molecule type" value="Genomic_DNA"/>
</dbReference>
<dbReference type="SMR" id="Q1J740"/>
<dbReference type="KEGG" id="spi:MGAS10750_Spy0784"/>
<dbReference type="HOGENOM" id="CLU_033732_3_0_9"/>
<dbReference type="Proteomes" id="UP000002434">
    <property type="component" value="Chromosome"/>
</dbReference>
<dbReference type="GO" id="GO:0005829">
    <property type="term" value="C:cytosol"/>
    <property type="evidence" value="ECO:0007669"/>
    <property type="project" value="TreeGrafter"/>
</dbReference>
<dbReference type="GO" id="GO:0005525">
    <property type="term" value="F:GTP binding"/>
    <property type="evidence" value="ECO:0007669"/>
    <property type="project" value="UniProtKB-UniRule"/>
</dbReference>
<dbReference type="GO" id="GO:0046872">
    <property type="term" value="F:metal ion binding"/>
    <property type="evidence" value="ECO:0007669"/>
    <property type="project" value="UniProtKB-KW"/>
</dbReference>
<dbReference type="GO" id="GO:0000917">
    <property type="term" value="P:division septum assembly"/>
    <property type="evidence" value="ECO:0007669"/>
    <property type="project" value="UniProtKB-KW"/>
</dbReference>
<dbReference type="CDD" id="cd01876">
    <property type="entry name" value="YihA_EngB"/>
    <property type="match status" value="1"/>
</dbReference>
<dbReference type="FunFam" id="3.40.50.300:FF:000098">
    <property type="entry name" value="Probable GTP-binding protein EngB"/>
    <property type="match status" value="1"/>
</dbReference>
<dbReference type="Gene3D" id="3.40.50.300">
    <property type="entry name" value="P-loop containing nucleotide triphosphate hydrolases"/>
    <property type="match status" value="1"/>
</dbReference>
<dbReference type="HAMAP" id="MF_00321">
    <property type="entry name" value="GTPase_EngB"/>
    <property type="match status" value="1"/>
</dbReference>
<dbReference type="InterPro" id="IPR030393">
    <property type="entry name" value="G_ENGB_dom"/>
</dbReference>
<dbReference type="InterPro" id="IPR006073">
    <property type="entry name" value="GTP-bd"/>
</dbReference>
<dbReference type="InterPro" id="IPR019987">
    <property type="entry name" value="GTP-bd_ribosome_bio_YsxC"/>
</dbReference>
<dbReference type="InterPro" id="IPR027417">
    <property type="entry name" value="P-loop_NTPase"/>
</dbReference>
<dbReference type="InterPro" id="IPR005225">
    <property type="entry name" value="Small_GTP-bd"/>
</dbReference>
<dbReference type="NCBIfam" id="TIGR03598">
    <property type="entry name" value="GTPase_YsxC"/>
    <property type="match status" value="1"/>
</dbReference>
<dbReference type="NCBIfam" id="TIGR00231">
    <property type="entry name" value="small_GTP"/>
    <property type="match status" value="1"/>
</dbReference>
<dbReference type="PANTHER" id="PTHR11649:SF13">
    <property type="entry name" value="ENGB-TYPE G DOMAIN-CONTAINING PROTEIN"/>
    <property type="match status" value="1"/>
</dbReference>
<dbReference type="PANTHER" id="PTHR11649">
    <property type="entry name" value="MSS1/TRME-RELATED GTP-BINDING PROTEIN"/>
    <property type="match status" value="1"/>
</dbReference>
<dbReference type="Pfam" id="PF01926">
    <property type="entry name" value="MMR_HSR1"/>
    <property type="match status" value="1"/>
</dbReference>
<dbReference type="SUPFAM" id="SSF52540">
    <property type="entry name" value="P-loop containing nucleoside triphosphate hydrolases"/>
    <property type="match status" value="1"/>
</dbReference>
<dbReference type="PROSITE" id="PS51706">
    <property type="entry name" value="G_ENGB"/>
    <property type="match status" value="1"/>
</dbReference>
<gene>
    <name evidence="1" type="primary">engB</name>
    <name type="ordered locus">MGAS10750_Spy0784</name>
</gene>
<comment type="function">
    <text evidence="1">Necessary for normal cell division and for the maintenance of normal septation.</text>
</comment>
<comment type="cofactor">
    <cofactor evidence="1">
        <name>Mg(2+)</name>
        <dbReference type="ChEBI" id="CHEBI:18420"/>
    </cofactor>
</comment>
<comment type="similarity">
    <text evidence="1">Belongs to the TRAFAC class TrmE-Era-EngA-EngB-Septin-like GTPase superfamily. EngB GTPase family.</text>
</comment>